<dbReference type="EMBL" id="CP001052">
    <property type="protein sequence ID" value="ACD17939.1"/>
    <property type="molecule type" value="Genomic_DNA"/>
</dbReference>
<dbReference type="RefSeq" id="WP_012434498.1">
    <property type="nucleotide sequence ID" value="NC_010681.1"/>
</dbReference>
<dbReference type="SMR" id="B2SZ54"/>
<dbReference type="STRING" id="398527.Bphyt_3549"/>
<dbReference type="KEGG" id="bpy:Bphyt_3549"/>
<dbReference type="eggNOG" id="COG1826">
    <property type="taxonomic scope" value="Bacteria"/>
</dbReference>
<dbReference type="HOGENOM" id="CLU_086034_5_3_4"/>
<dbReference type="OrthoDB" id="7066617at2"/>
<dbReference type="Proteomes" id="UP000001739">
    <property type="component" value="Chromosome 1"/>
</dbReference>
<dbReference type="GO" id="GO:0033281">
    <property type="term" value="C:TAT protein transport complex"/>
    <property type="evidence" value="ECO:0007669"/>
    <property type="project" value="UniProtKB-UniRule"/>
</dbReference>
<dbReference type="GO" id="GO:0008320">
    <property type="term" value="F:protein transmembrane transporter activity"/>
    <property type="evidence" value="ECO:0007669"/>
    <property type="project" value="UniProtKB-UniRule"/>
</dbReference>
<dbReference type="GO" id="GO:0043953">
    <property type="term" value="P:protein transport by the Tat complex"/>
    <property type="evidence" value="ECO:0007669"/>
    <property type="project" value="UniProtKB-UniRule"/>
</dbReference>
<dbReference type="Gene3D" id="1.20.5.3310">
    <property type="match status" value="1"/>
</dbReference>
<dbReference type="HAMAP" id="MF_00236">
    <property type="entry name" value="TatA_E"/>
    <property type="match status" value="1"/>
</dbReference>
<dbReference type="InterPro" id="IPR003369">
    <property type="entry name" value="TatA/B/E"/>
</dbReference>
<dbReference type="InterPro" id="IPR006312">
    <property type="entry name" value="TatA/E"/>
</dbReference>
<dbReference type="NCBIfam" id="NF002813">
    <property type="entry name" value="PRK02958.1"/>
    <property type="match status" value="1"/>
</dbReference>
<dbReference type="NCBIfam" id="TIGR01411">
    <property type="entry name" value="tatAE"/>
    <property type="match status" value="1"/>
</dbReference>
<dbReference type="PANTHER" id="PTHR42982">
    <property type="entry name" value="SEC-INDEPENDENT PROTEIN TRANSLOCASE PROTEIN TATA"/>
    <property type="match status" value="1"/>
</dbReference>
<dbReference type="PANTHER" id="PTHR42982:SF1">
    <property type="entry name" value="SEC-INDEPENDENT PROTEIN TRANSLOCASE PROTEIN TATA"/>
    <property type="match status" value="1"/>
</dbReference>
<dbReference type="Pfam" id="PF02416">
    <property type="entry name" value="TatA_B_E"/>
    <property type="match status" value="1"/>
</dbReference>
<sequence>MGSLSIWHWLIVLLIVALVFGTKKLRNIGGDLGGAVKGFKEGMKEADAPAAEAQQRELPRNGAVDVEAKEKTPRSGDYR</sequence>
<keyword id="KW-0997">Cell inner membrane</keyword>
<keyword id="KW-1003">Cell membrane</keyword>
<keyword id="KW-0472">Membrane</keyword>
<keyword id="KW-0653">Protein transport</keyword>
<keyword id="KW-0811">Translocation</keyword>
<keyword id="KW-0812">Transmembrane</keyword>
<keyword id="KW-1133">Transmembrane helix</keyword>
<keyword id="KW-0813">Transport</keyword>
<evidence type="ECO:0000255" key="1">
    <source>
        <dbReference type="HAMAP-Rule" id="MF_00236"/>
    </source>
</evidence>
<evidence type="ECO:0000256" key="2">
    <source>
        <dbReference type="SAM" id="MobiDB-lite"/>
    </source>
</evidence>
<feature type="chain" id="PRO_1000197861" description="Sec-independent protein translocase protein TatA">
    <location>
        <begin position="1"/>
        <end position="79"/>
    </location>
</feature>
<feature type="transmembrane region" description="Helical" evidence="1">
    <location>
        <begin position="1"/>
        <end position="21"/>
    </location>
</feature>
<feature type="region of interest" description="Disordered" evidence="2">
    <location>
        <begin position="46"/>
        <end position="79"/>
    </location>
</feature>
<feature type="compositionally biased region" description="Basic and acidic residues" evidence="2">
    <location>
        <begin position="66"/>
        <end position="79"/>
    </location>
</feature>
<name>TATA_PARPJ</name>
<protein>
    <recommendedName>
        <fullName evidence="1">Sec-independent protein translocase protein TatA</fullName>
    </recommendedName>
</protein>
<reference key="1">
    <citation type="journal article" date="2011" name="J. Bacteriol.">
        <title>Complete genome sequence of the plant growth-promoting endophyte Burkholderia phytofirmans strain PsJN.</title>
        <authorList>
            <person name="Weilharter A."/>
            <person name="Mitter B."/>
            <person name="Shin M.V."/>
            <person name="Chain P.S."/>
            <person name="Nowak J."/>
            <person name="Sessitsch A."/>
        </authorList>
    </citation>
    <scope>NUCLEOTIDE SEQUENCE [LARGE SCALE GENOMIC DNA]</scope>
    <source>
        <strain>DSM 17436 / LMG 22146 / PsJN</strain>
    </source>
</reference>
<accession>B2SZ54</accession>
<proteinExistence type="inferred from homology"/>
<organism>
    <name type="scientific">Paraburkholderia phytofirmans (strain DSM 17436 / LMG 22146 / PsJN)</name>
    <name type="common">Burkholderia phytofirmans</name>
    <dbReference type="NCBI Taxonomy" id="398527"/>
    <lineage>
        <taxon>Bacteria</taxon>
        <taxon>Pseudomonadati</taxon>
        <taxon>Pseudomonadota</taxon>
        <taxon>Betaproteobacteria</taxon>
        <taxon>Burkholderiales</taxon>
        <taxon>Burkholderiaceae</taxon>
        <taxon>Paraburkholderia</taxon>
    </lineage>
</organism>
<comment type="function">
    <text evidence="1">Part of the twin-arginine translocation (Tat) system that transports large folded proteins containing a characteristic twin-arginine motif in their signal peptide across membranes. TatA could form the protein-conducting channel of the Tat system.</text>
</comment>
<comment type="subunit">
    <text evidence="1">The Tat system comprises two distinct complexes: a TatABC complex, containing multiple copies of TatA, TatB and TatC subunits, and a separate TatA complex, containing only TatA subunits. Substrates initially bind to the TatABC complex, which probably triggers association of the separate TatA complex to form the active translocon.</text>
</comment>
<comment type="subcellular location">
    <subcellularLocation>
        <location evidence="1">Cell inner membrane</location>
        <topology evidence="1">Single-pass membrane protein</topology>
    </subcellularLocation>
</comment>
<comment type="similarity">
    <text evidence="1">Belongs to the TatA/E family.</text>
</comment>
<gene>
    <name evidence="1" type="primary">tatA</name>
    <name type="ordered locus">Bphyt_3549</name>
</gene>